<reference key="1">
    <citation type="submission" date="2004-11" db="EMBL/GenBank/DDBJ databases">
        <authorList>
            <consortium name="The German cDNA consortium"/>
        </authorList>
    </citation>
    <scope>NUCLEOTIDE SEQUENCE [LARGE SCALE MRNA]</scope>
    <source>
        <tissue>Brain cortex</tissue>
    </source>
</reference>
<dbReference type="EMBL" id="CR860559">
    <property type="protein sequence ID" value="CAH92684.1"/>
    <property type="molecule type" value="mRNA"/>
</dbReference>
<dbReference type="RefSeq" id="NP_001126572.1">
    <property type="nucleotide sequence ID" value="NM_001133100.1"/>
</dbReference>
<dbReference type="SMR" id="Q5R6D2"/>
<dbReference type="FunCoup" id="Q5R6D2">
    <property type="interactions" value="2546"/>
</dbReference>
<dbReference type="STRING" id="9601.ENSPPYP00000021991"/>
<dbReference type="Ensembl" id="ENSPPYT00000022898.2">
    <property type="protein sequence ID" value="ENSPPYP00000021991.2"/>
    <property type="gene ID" value="ENSPPYG00000019625.2"/>
</dbReference>
<dbReference type="GeneID" id="100173563"/>
<dbReference type="KEGG" id="pon:100173563"/>
<dbReference type="CTD" id="6812"/>
<dbReference type="eggNOG" id="KOG1300">
    <property type="taxonomic scope" value="Eukaryota"/>
</dbReference>
<dbReference type="GeneTree" id="ENSGT00940000155127"/>
<dbReference type="HOGENOM" id="CLU_009210_2_0_1"/>
<dbReference type="InParanoid" id="Q5R6D2"/>
<dbReference type="OrthoDB" id="2228at2759"/>
<dbReference type="Proteomes" id="UP000001595">
    <property type="component" value="Chromosome 9"/>
</dbReference>
<dbReference type="GO" id="GO:0005829">
    <property type="term" value="C:cytosol"/>
    <property type="evidence" value="ECO:0007669"/>
    <property type="project" value="UniProtKB-SubCell"/>
</dbReference>
<dbReference type="GO" id="GO:0016020">
    <property type="term" value="C:membrane"/>
    <property type="evidence" value="ECO:0007669"/>
    <property type="project" value="UniProtKB-SubCell"/>
</dbReference>
<dbReference type="GO" id="GO:0015031">
    <property type="term" value="P:protein transport"/>
    <property type="evidence" value="ECO:0007669"/>
    <property type="project" value="UniProtKB-KW"/>
</dbReference>
<dbReference type="GO" id="GO:0016192">
    <property type="term" value="P:vesicle-mediated transport"/>
    <property type="evidence" value="ECO:0007669"/>
    <property type="project" value="InterPro"/>
</dbReference>
<dbReference type="FunFam" id="1.25.40.60:FF:000001">
    <property type="entry name" value="syntaxin-binding protein 1 isoform X2"/>
    <property type="match status" value="1"/>
</dbReference>
<dbReference type="FunFam" id="3.40.50.2060:FF:000001">
    <property type="entry name" value="syntaxin-binding protein 1 isoform X2"/>
    <property type="match status" value="1"/>
</dbReference>
<dbReference type="FunFam" id="3.90.830.10:FF:000001">
    <property type="entry name" value="syntaxin-binding protein 1 isoform X2"/>
    <property type="match status" value="1"/>
</dbReference>
<dbReference type="Gene3D" id="1.25.40.60">
    <property type="match status" value="1"/>
</dbReference>
<dbReference type="Gene3D" id="3.40.50.1910">
    <property type="match status" value="1"/>
</dbReference>
<dbReference type="Gene3D" id="3.40.50.2060">
    <property type="match status" value="1"/>
</dbReference>
<dbReference type="Gene3D" id="3.90.830.10">
    <property type="entry name" value="Syntaxin Binding Protein 1, Chain A, domain 2"/>
    <property type="match status" value="1"/>
</dbReference>
<dbReference type="InterPro" id="IPR043154">
    <property type="entry name" value="Sec-1-like_dom1"/>
</dbReference>
<dbReference type="InterPro" id="IPR043127">
    <property type="entry name" value="Sec-1-like_dom3a"/>
</dbReference>
<dbReference type="InterPro" id="IPR001619">
    <property type="entry name" value="Sec1-like"/>
</dbReference>
<dbReference type="InterPro" id="IPR027482">
    <property type="entry name" value="Sec1-like_dom2"/>
</dbReference>
<dbReference type="InterPro" id="IPR036045">
    <property type="entry name" value="Sec1-like_sf"/>
</dbReference>
<dbReference type="PANTHER" id="PTHR11679">
    <property type="entry name" value="VESICLE PROTEIN SORTING-ASSOCIATED"/>
    <property type="match status" value="1"/>
</dbReference>
<dbReference type="Pfam" id="PF00995">
    <property type="entry name" value="Sec1"/>
    <property type="match status" value="1"/>
</dbReference>
<dbReference type="PIRSF" id="PIRSF005715">
    <property type="entry name" value="VPS45_Sec1"/>
    <property type="match status" value="1"/>
</dbReference>
<dbReference type="SUPFAM" id="SSF56815">
    <property type="entry name" value="Sec1/munc18-like (SM) proteins"/>
    <property type="match status" value="1"/>
</dbReference>
<gene>
    <name type="primary">STXBP1</name>
    <name type="synonym">UNC18A</name>
</gene>
<feature type="chain" id="PRO_0000291775" description="Syntaxin-binding protein 1">
    <location>
        <begin position="1"/>
        <end position="594"/>
    </location>
</feature>
<feature type="modified residue" description="Phosphoserine" evidence="5">
    <location>
        <position position="476"/>
    </location>
</feature>
<feature type="modified residue" description="Phosphoserine" evidence="2">
    <location>
        <position position="509"/>
    </location>
</feature>
<feature type="modified residue" description="Phosphoserine" evidence="2">
    <location>
        <position position="511"/>
    </location>
</feature>
<feature type="modified residue" description="Phosphoserine" evidence="2">
    <location>
        <position position="516"/>
    </location>
</feature>
<feature type="modified residue" description="Phosphoserine" evidence="5">
    <location>
        <position position="593"/>
    </location>
</feature>
<proteinExistence type="evidence at transcript level"/>
<keyword id="KW-0963">Cytoplasm</keyword>
<keyword id="KW-0472">Membrane</keyword>
<keyword id="KW-0597">Phosphoprotein</keyword>
<keyword id="KW-0653">Protein transport</keyword>
<keyword id="KW-1185">Reference proteome</keyword>
<keyword id="KW-0813">Transport</keyword>
<comment type="function">
    <text evidence="1 2">May participate in the regulation of synaptic vesicle docking and fusion, possibly through interaction with GTP-binding proteins. Essential for neurotransmission and binds syntaxin, a component of the synaptic vesicle fusion machinery probably in a 1:1 ratio. Can interact with syntaxins 1, 2, and 3 but not syntaxin 4. Involved in the release of neurotransmitters from neurons through interacting with SNARE complex component STX1A and mediating the assembly of the SNARE complex at synaptic membranes (By similarity). May play a role in determining the specificity of intracellular fusion reactions (By similarity).</text>
</comment>
<comment type="subunit">
    <text evidence="2 3 4 5">Binds SYTL4 (By similarity). Interacts with STX1A (By similarity). The interaction recruits SNARE complex components SNAP25 and VAMP2 and mediates neurotransmitter release from neurons (By similarity). Interacts with alpha-synuclein/SNCA; this interaction controls SNCA self-replicating aggregation (By similarity). Interacts with CABP5 (By similarity).</text>
</comment>
<comment type="subcellular location">
    <subcellularLocation>
        <location evidence="4">Cytoplasm</location>
        <location evidence="4">Cytosol</location>
    </subcellularLocation>
    <subcellularLocation>
        <location evidence="1">Membrane</location>
        <topology evidence="1">Peripheral membrane protein</topology>
    </subcellularLocation>
</comment>
<comment type="similarity">
    <text evidence="6">Belongs to the STXBP/unc-18/SEC1 family.</text>
</comment>
<evidence type="ECO:0000250" key="1"/>
<evidence type="ECO:0000250" key="2">
    <source>
        <dbReference type="UniProtKB" id="O08599"/>
    </source>
</evidence>
<evidence type="ECO:0000250" key="3">
    <source>
        <dbReference type="UniProtKB" id="P61763"/>
    </source>
</evidence>
<evidence type="ECO:0000250" key="4">
    <source>
        <dbReference type="UniProtKB" id="P61764"/>
    </source>
</evidence>
<evidence type="ECO:0000250" key="5">
    <source>
        <dbReference type="UniProtKB" id="P61765"/>
    </source>
</evidence>
<evidence type="ECO:0000305" key="6"/>
<sequence>MAPIGLKAVVGEKIMHDVIKKVKKKGEWKVLVVDQLSMRMLSSCCKMTDIMTEGITIVEDINKRREPLPSLEAVYLITPSEKSVHSLISDFKDPPTAKYRAAHVFFTDSCPDALFNELVKSRAAKVIKTLTEINIAFLPYESQVYSLDSADSFQSFYSPHKAQMKNPILERLAEQIATLCATLKEYPAVRYRGEYKDNALLAQLIQDKLDAYKADDPTMGEGPDKARSQLLILDRGFDPSSPVLHELTFQAMSYDLLPIENDVYKYETSGIGEARVKEVLLDEDDDLWIALRHKHIAEVSQEVTRSLKDFSSSKRMNTGEKTTMRDLSQMLKKMPQYQKELSKYSTHLHLAEDCMKHYQGTVDKLCRVEQDLAMGTDAEGEKIKDPMRAIVPILLDANVSTYDKIRIILLYIFLKNGITEENLNKLIQHAQIPPEDSEIITNMAHLGVPIVTDSTLRRRSKPERKERISEQTYQLSRWTPIIKDIMEDTIEDKLDTKHYPYISTRSSASFSTTAVSARYGHWHKNKAPGEYRSGPRLIIFILGGVSLNEMRCAYEVTQANGKWEVLIGSTHILTPQKLLDTLKKLNKTDEEISS</sequence>
<protein>
    <recommendedName>
        <fullName>Syntaxin-binding protein 1</fullName>
    </recommendedName>
    <alternativeName>
        <fullName>N-Sec1</fullName>
    </alternativeName>
    <alternativeName>
        <fullName>Protein unc-18 homolog 1</fullName>
        <shortName>Unc18-1</shortName>
    </alternativeName>
    <alternativeName>
        <fullName>Protein unc-18 homolog A</fullName>
        <shortName>Unc-18A</shortName>
    </alternativeName>
</protein>
<accession>Q5R6D2</accession>
<name>STXB1_PONAB</name>
<organism>
    <name type="scientific">Pongo abelii</name>
    <name type="common">Sumatran orangutan</name>
    <name type="synonym">Pongo pygmaeus abelii</name>
    <dbReference type="NCBI Taxonomy" id="9601"/>
    <lineage>
        <taxon>Eukaryota</taxon>
        <taxon>Metazoa</taxon>
        <taxon>Chordata</taxon>
        <taxon>Craniata</taxon>
        <taxon>Vertebrata</taxon>
        <taxon>Euteleostomi</taxon>
        <taxon>Mammalia</taxon>
        <taxon>Eutheria</taxon>
        <taxon>Euarchontoglires</taxon>
        <taxon>Primates</taxon>
        <taxon>Haplorrhini</taxon>
        <taxon>Catarrhini</taxon>
        <taxon>Hominidae</taxon>
        <taxon>Pongo</taxon>
    </lineage>
</organism>